<name>PLBL2_HUMAN</name>
<comment type="function">
    <text evidence="1">Putative phospholipase.</text>
</comment>
<comment type="subunit">
    <text evidence="2">Interacts with IGF2R.</text>
</comment>
<comment type="interaction">
    <interactant intactId="EBI-10968883">
        <id>Q8NHP8</id>
    </interactant>
    <interactant intactId="EBI-17247926">
        <id>Q9NY72</id>
        <label>SCN3B</label>
    </interactant>
    <organismsDiffer>false</organismsDiffer>
    <experiments>3</experiments>
</comment>
<comment type="subcellular location">
    <subcellularLocation>
        <location evidence="2">Lysosome lumen</location>
    </subcellularLocation>
</comment>
<comment type="alternative products">
    <event type="alternative splicing"/>
    <isoform>
        <id>Q8NHP8-1</id>
        <name>1</name>
        <sequence type="displayed"/>
    </isoform>
    <isoform>
        <id>Q8NHP8-2</id>
        <name>2</name>
        <sequence type="described" ref="VSP_055623"/>
    </isoform>
</comment>
<comment type="tissue specificity">
    <text evidence="2">Ubiquitously expressed, with highest levels in heart, brain and liver.</text>
</comment>
<comment type="PTM">
    <text>The p76 protein is synthesized as a 80 kDa precursor which is then processed into a N-terminal 32 kDa form and a C-terminal 45 kDa form.</text>
</comment>
<comment type="PTM">
    <text evidence="2 3">Glycosylated; contains mannose 6-phosphate sugars.</text>
</comment>
<comment type="similarity">
    <text evidence="5">Belongs to the phospholipase B-like family.</text>
</comment>
<keyword id="KW-0025">Alternative splicing</keyword>
<keyword id="KW-0903">Direct protein sequencing</keyword>
<keyword id="KW-1015">Disulfide bond</keyword>
<keyword id="KW-0325">Glycoprotein</keyword>
<keyword id="KW-0378">Hydrolase</keyword>
<keyword id="KW-0442">Lipid degradation</keyword>
<keyword id="KW-0443">Lipid metabolism</keyword>
<keyword id="KW-0458">Lysosome</keyword>
<keyword id="KW-1267">Proteomics identification</keyword>
<keyword id="KW-1185">Reference proteome</keyword>
<keyword id="KW-0732">Signal</keyword>
<sequence>MVGQMYCYPGSHLARALTRALALALVLALLVGPFLSGLAGAIPAPGGRWARDGQVPPASRSRSVLLDVSAGQLLMVDGRHPDAVAWANLTNAIRETGWAFLELGTSGQYNDSLQAYAAGVVEAAVSEELIYMHWMNTVVNYCGPFEYEVGYCERLKSFLEANLEWMQEEMESNPDSPYWHQVRLTLLQLKGLEDSYEGRVSFPAGKFTIKPLGFLLLQLSGDLEDLELALNKTKIKPSLGSGSCSALIKLLPGQSDLLVAHNTWNNYQHMLRVIKKYWLQFREGPWGDYPLVPGNKLVFSSYPGTIFSCDDFYILGSGLVTLETTIGNKNPALWKYVRPRGCVLEWVRNIVANRLASDGATWADIFKRFNSGTYNNQWMIVDYKAFIPGGPSPGSRVLTILEQIPGMVVVADKTSELYQKTYWASYNIPSFETVFNASGLQALVAQYGDWFSYDGSPRAQIFRRNQSLVQDMDSMVRLMRYNDFLHDPLSLCKACNPQPNGENAISARSDLNPANGSYPFQALRQRSHGGIDVKVTSMSLARILSLLAASGPTWDQVPPFQWSTSPFSGLLHMGQPDLWKFAPVKVSWD</sequence>
<evidence type="ECO:0000250" key="1"/>
<evidence type="ECO:0000269" key="2">
    <source>
    </source>
</evidence>
<evidence type="ECO:0000269" key="3">
    <source>
    </source>
</evidence>
<evidence type="ECO:0000303" key="4">
    <source>
    </source>
</evidence>
<evidence type="ECO:0000305" key="5"/>
<protein>
    <recommendedName>
        <fullName>Putative phospholipase B-like 2</fullName>
        <ecNumber>3.1.1.-</ecNumber>
    </recommendedName>
    <alternativeName>
        <fullName>76 kDa protein</fullName>
        <shortName>p76</shortName>
    </alternativeName>
    <alternativeName>
        <fullName>LAMA-like protein 2</fullName>
    </alternativeName>
    <alternativeName>
        <fullName>Lamina ancestor homolog 2</fullName>
    </alternativeName>
    <alternativeName>
        <fullName>Phospholipase B domain-containing protein 2</fullName>
    </alternativeName>
    <component>
        <recommendedName>
            <fullName>Putative phospholipase B-like 2 32 kDa form</fullName>
        </recommendedName>
    </component>
    <component>
        <recommendedName>
            <fullName>Putative phospholipase B-like 2 45 kDa form</fullName>
        </recommendedName>
    </component>
</protein>
<organism>
    <name type="scientific">Homo sapiens</name>
    <name type="common">Human</name>
    <dbReference type="NCBI Taxonomy" id="9606"/>
    <lineage>
        <taxon>Eukaryota</taxon>
        <taxon>Metazoa</taxon>
        <taxon>Chordata</taxon>
        <taxon>Craniata</taxon>
        <taxon>Vertebrata</taxon>
        <taxon>Euteleostomi</taxon>
        <taxon>Mammalia</taxon>
        <taxon>Eutheria</taxon>
        <taxon>Euarchontoglires</taxon>
        <taxon>Primates</taxon>
        <taxon>Haplorrhini</taxon>
        <taxon>Catarrhini</taxon>
        <taxon>Hominidae</taxon>
        <taxon>Homo</taxon>
    </lineage>
</organism>
<proteinExistence type="evidence at protein level"/>
<dbReference type="EC" id="3.1.1.-"/>
<dbReference type="EMBL" id="AC010178">
    <property type="status" value="NOT_ANNOTATED_CDS"/>
    <property type="molecule type" value="Genomic_DNA"/>
</dbReference>
<dbReference type="EMBL" id="BC030618">
    <property type="protein sequence ID" value="AAH30618.1"/>
    <property type="molecule type" value="mRNA"/>
</dbReference>
<dbReference type="EMBL" id="BC071832">
    <property type="status" value="NOT_ANNOTATED_CDS"/>
    <property type="molecule type" value="mRNA"/>
</dbReference>
<dbReference type="CCDS" id="CCDS53834.1">
    <molecule id="Q8NHP8-2"/>
</dbReference>
<dbReference type="CCDS" id="CCDS9168.1">
    <molecule id="Q8NHP8-1"/>
</dbReference>
<dbReference type="RefSeq" id="NP_001153199.1">
    <molecule id="Q8NHP8-2"/>
    <property type="nucleotide sequence ID" value="NM_001159727.2"/>
</dbReference>
<dbReference type="RefSeq" id="NP_775813.2">
    <molecule id="Q8NHP8-1"/>
    <property type="nucleotide sequence ID" value="NM_173542.4"/>
</dbReference>
<dbReference type="SMR" id="Q8NHP8"/>
<dbReference type="BioGRID" id="128208">
    <property type="interactions" value="49"/>
</dbReference>
<dbReference type="FunCoup" id="Q8NHP8">
    <property type="interactions" value="295"/>
</dbReference>
<dbReference type="IntAct" id="Q8NHP8">
    <property type="interactions" value="19"/>
</dbReference>
<dbReference type="STRING" id="9606.ENSP00000280800"/>
<dbReference type="MEROPS" id="C95.001"/>
<dbReference type="GlyConnect" id="1700">
    <property type="glycosylation" value="6 N-Linked glycans (3 sites)"/>
</dbReference>
<dbReference type="GlyCosmos" id="Q8NHP8">
    <property type="glycosylation" value="7 sites, 7 glycans"/>
</dbReference>
<dbReference type="GlyGen" id="Q8NHP8">
    <property type="glycosylation" value="12 sites, 21 N-linked glycans (3 sites), 1 N-linked;o-linked glycan (1 site), 1 O-linked glycan (3 sites)"/>
</dbReference>
<dbReference type="iPTMnet" id="Q8NHP8"/>
<dbReference type="MetOSite" id="Q8NHP8"/>
<dbReference type="PhosphoSitePlus" id="Q8NHP8"/>
<dbReference type="SwissPalm" id="Q8NHP8"/>
<dbReference type="BioMuta" id="PLBD2"/>
<dbReference type="DMDM" id="224471847"/>
<dbReference type="jPOST" id="Q8NHP8"/>
<dbReference type="MassIVE" id="Q8NHP8"/>
<dbReference type="PaxDb" id="9606-ENSP00000280800"/>
<dbReference type="PeptideAtlas" id="Q8NHP8"/>
<dbReference type="ProteomicsDB" id="26851"/>
<dbReference type="ProteomicsDB" id="73733">
    <molecule id="Q8NHP8-1"/>
</dbReference>
<dbReference type="Pumba" id="Q8NHP8"/>
<dbReference type="Antibodypedia" id="2539">
    <property type="antibodies" value="96 antibodies from 19 providers"/>
</dbReference>
<dbReference type="DNASU" id="196463"/>
<dbReference type="Ensembl" id="ENST00000280800.5">
    <molecule id="Q8NHP8-1"/>
    <property type="protein sequence ID" value="ENSP00000280800.3"/>
    <property type="gene ID" value="ENSG00000151176.8"/>
</dbReference>
<dbReference type="Ensembl" id="ENST00000545182.6">
    <molecule id="Q8NHP8-2"/>
    <property type="protein sequence ID" value="ENSP00000443463.2"/>
    <property type="gene ID" value="ENSG00000151176.8"/>
</dbReference>
<dbReference type="GeneID" id="196463"/>
<dbReference type="KEGG" id="hsa:196463"/>
<dbReference type="MANE-Select" id="ENST00000280800.5">
    <property type="protein sequence ID" value="ENSP00000280800.3"/>
    <property type="RefSeq nucleotide sequence ID" value="NM_173542.4"/>
    <property type="RefSeq protein sequence ID" value="NP_775813.2"/>
</dbReference>
<dbReference type="UCSC" id="uc001tve.3">
    <molecule id="Q8NHP8-1"/>
    <property type="organism name" value="human"/>
</dbReference>
<dbReference type="AGR" id="HGNC:27283"/>
<dbReference type="CTD" id="196463"/>
<dbReference type="GeneCards" id="PLBD2"/>
<dbReference type="HGNC" id="HGNC:27283">
    <property type="gene designation" value="PLBD2"/>
</dbReference>
<dbReference type="HPA" id="ENSG00000151176">
    <property type="expression patterns" value="Tissue enhanced (adrenal)"/>
</dbReference>
<dbReference type="MIM" id="620097">
    <property type="type" value="gene"/>
</dbReference>
<dbReference type="neXtProt" id="NX_Q8NHP8"/>
<dbReference type="OpenTargets" id="ENSG00000151176"/>
<dbReference type="PharmGKB" id="PA164724624"/>
<dbReference type="VEuPathDB" id="HostDB:ENSG00000151176"/>
<dbReference type="eggNOG" id="KOG3774">
    <property type="taxonomic scope" value="Eukaryota"/>
</dbReference>
<dbReference type="GeneTree" id="ENSGT00530000063509"/>
<dbReference type="HOGENOM" id="CLU_027106_4_0_1"/>
<dbReference type="InParanoid" id="Q8NHP8"/>
<dbReference type="OMA" id="YQEGYWA"/>
<dbReference type="OrthoDB" id="443524at2759"/>
<dbReference type="PAN-GO" id="Q8NHP8">
    <property type="GO annotations" value="3 GO annotations based on evolutionary models"/>
</dbReference>
<dbReference type="PhylomeDB" id="Q8NHP8"/>
<dbReference type="TreeFam" id="TF315042"/>
<dbReference type="PathwayCommons" id="Q8NHP8"/>
<dbReference type="SignaLink" id="Q8NHP8"/>
<dbReference type="BioGRID-ORCS" id="196463">
    <property type="hits" value="19 hits in 1169 CRISPR screens"/>
</dbReference>
<dbReference type="ChiTaRS" id="PLBD2">
    <property type="organism name" value="human"/>
</dbReference>
<dbReference type="GenomeRNAi" id="196463"/>
<dbReference type="Pharos" id="Q8NHP8">
    <property type="development level" value="Tbio"/>
</dbReference>
<dbReference type="PRO" id="PR:Q8NHP8"/>
<dbReference type="Proteomes" id="UP000005640">
    <property type="component" value="Chromosome 12"/>
</dbReference>
<dbReference type="RNAct" id="Q8NHP8">
    <property type="molecule type" value="protein"/>
</dbReference>
<dbReference type="Bgee" id="ENSG00000151176">
    <property type="expression patterns" value="Expressed in right adrenal gland cortex and 177 other cell types or tissues"/>
</dbReference>
<dbReference type="ExpressionAtlas" id="Q8NHP8">
    <property type="expression patterns" value="baseline and differential"/>
</dbReference>
<dbReference type="GO" id="GO:0070062">
    <property type="term" value="C:extracellular exosome"/>
    <property type="evidence" value="ECO:0007005"/>
    <property type="project" value="UniProtKB"/>
</dbReference>
<dbReference type="GO" id="GO:0005576">
    <property type="term" value="C:extracellular region"/>
    <property type="evidence" value="ECO:0000318"/>
    <property type="project" value="GO_Central"/>
</dbReference>
<dbReference type="GO" id="GO:0043202">
    <property type="term" value="C:lysosomal lumen"/>
    <property type="evidence" value="ECO:0007669"/>
    <property type="project" value="UniProtKB-SubCell"/>
</dbReference>
<dbReference type="GO" id="GO:0004620">
    <property type="term" value="F:phospholipase activity"/>
    <property type="evidence" value="ECO:0000318"/>
    <property type="project" value="GO_Central"/>
</dbReference>
<dbReference type="GO" id="GO:0009395">
    <property type="term" value="P:phospholipid catabolic process"/>
    <property type="evidence" value="ECO:0000318"/>
    <property type="project" value="GO_Central"/>
</dbReference>
<dbReference type="FunFam" id="1.10.439.20:FF:000001">
    <property type="entry name" value="Phospholipase B-like"/>
    <property type="match status" value="1"/>
</dbReference>
<dbReference type="FunFam" id="3.60.60.20:FF:000001">
    <property type="entry name" value="Phospholipase B-like"/>
    <property type="match status" value="1"/>
</dbReference>
<dbReference type="FunFam" id="2.10.70.60:FF:000002">
    <property type="entry name" value="Putative phospholipase B-like 2"/>
    <property type="match status" value="1"/>
</dbReference>
<dbReference type="Gene3D" id="3.60.60.20">
    <property type="match status" value="1"/>
</dbReference>
<dbReference type="Gene3D" id="2.10.70.60">
    <property type="entry name" value="Phospholipase B-like, domain 1"/>
    <property type="match status" value="1"/>
</dbReference>
<dbReference type="Gene3D" id="1.10.439.20">
    <property type="entry name" value="Phospholipase B-like, domain 2"/>
    <property type="match status" value="1"/>
</dbReference>
<dbReference type="InterPro" id="IPR007000">
    <property type="entry name" value="PLipase_B-like"/>
</dbReference>
<dbReference type="InterPro" id="IPR043040">
    <property type="entry name" value="PLipase_B-like_dom1"/>
</dbReference>
<dbReference type="InterPro" id="IPR043041">
    <property type="entry name" value="PLipase_B-like_dom2"/>
</dbReference>
<dbReference type="InterPro" id="IPR043042">
    <property type="entry name" value="PLipase_B-like_dom3"/>
</dbReference>
<dbReference type="PANTHER" id="PTHR12370:SF3">
    <property type="entry name" value="PHOSPHOLIPASE B-LIKE 2-RELATED"/>
    <property type="match status" value="1"/>
</dbReference>
<dbReference type="PANTHER" id="PTHR12370">
    <property type="entry name" value="PHOSPHOLIPASE B-RELATED"/>
    <property type="match status" value="1"/>
</dbReference>
<dbReference type="Pfam" id="PF04916">
    <property type="entry name" value="Phospholip_B"/>
    <property type="match status" value="1"/>
</dbReference>
<reference key="1">
    <citation type="journal article" date="2006" name="Nature">
        <title>The finished DNA sequence of human chromosome 12.</title>
        <authorList>
            <person name="Scherer S.E."/>
            <person name="Muzny D.M."/>
            <person name="Buhay C.J."/>
            <person name="Chen R."/>
            <person name="Cree A."/>
            <person name="Ding Y."/>
            <person name="Dugan-Rocha S."/>
            <person name="Gill R."/>
            <person name="Gunaratne P."/>
            <person name="Harris R.A."/>
            <person name="Hawes A.C."/>
            <person name="Hernandez J."/>
            <person name="Hodgson A.V."/>
            <person name="Hume J."/>
            <person name="Jackson A."/>
            <person name="Khan Z.M."/>
            <person name="Kovar-Smith C."/>
            <person name="Lewis L.R."/>
            <person name="Lozado R.J."/>
            <person name="Metzker M.L."/>
            <person name="Milosavljevic A."/>
            <person name="Miner G.R."/>
            <person name="Montgomery K.T."/>
            <person name="Morgan M.B."/>
            <person name="Nazareth L.V."/>
            <person name="Scott G."/>
            <person name="Sodergren E."/>
            <person name="Song X.-Z."/>
            <person name="Steffen D."/>
            <person name="Lovering R.C."/>
            <person name="Wheeler D.A."/>
            <person name="Worley K.C."/>
            <person name="Yuan Y."/>
            <person name="Zhang Z."/>
            <person name="Adams C.Q."/>
            <person name="Ansari-Lari M.A."/>
            <person name="Ayele M."/>
            <person name="Brown M.J."/>
            <person name="Chen G."/>
            <person name="Chen Z."/>
            <person name="Clerc-Blankenburg K.P."/>
            <person name="Davis C."/>
            <person name="Delgado O."/>
            <person name="Dinh H.H."/>
            <person name="Draper H."/>
            <person name="Gonzalez-Garay M.L."/>
            <person name="Havlak P."/>
            <person name="Jackson L.R."/>
            <person name="Jacob L.S."/>
            <person name="Kelly S.H."/>
            <person name="Li L."/>
            <person name="Li Z."/>
            <person name="Liu J."/>
            <person name="Liu W."/>
            <person name="Lu J."/>
            <person name="Maheshwari M."/>
            <person name="Nguyen B.-V."/>
            <person name="Okwuonu G.O."/>
            <person name="Pasternak S."/>
            <person name="Perez L.M."/>
            <person name="Plopper F.J.H."/>
            <person name="Santibanez J."/>
            <person name="Shen H."/>
            <person name="Tabor P.E."/>
            <person name="Verduzco D."/>
            <person name="Waldron L."/>
            <person name="Wang Q."/>
            <person name="Williams G.A."/>
            <person name="Zhang J."/>
            <person name="Zhou J."/>
            <person name="Allen C.C."/>
            <person name="Amin A.G."/>
            <person name="Anyalebechi V."/>
            <person name="Bailey M."/>
            <person name="Barbaria J.A."/>
            <person name="Bimage K.E."/>
            <person name="Bryant N.P."/>
            <person name="Burch P.E."/>
            <person name="Burkett C.E."/>
            <person name="Burrell K.L."/>
            <person name="Calderon E."/>
            <person name="Cardenas V."/>
            <person name="Carter K."/>
            <person name="Casias K."/>
            <person name="Cavazos I."/>
            <person name="Cavazos S.R."/>
            <person name="Ceasar H."/>
            <person name="Chacko J."/>
            <person name="Chan S.N."/>
            <person name="Chavez D."/>
            <person name="Christopoulos C."/>
            <person name="Chu J."/>
            <person name="Cockrell R."/>
            <person name="Cox C.D."/>
            <person name="Dang M."/>
            <person name="Dathorne S.R."/>
            <person name="David R."/>
            <person name="Davis C.M."/>
            <person name="Davy-Carroll L."/>
            <person name="Deshazo D.R."/>
            <person name="Donlin J.E."/>
            <person name="D'Souza L."/>
            <person name="Eaves K.A."/>
            <person name="Egan A."/>
            <person name="Emery-Cohen A.J."/>
            <person name="Escotto M."/>
            <person name="Flagg N."/>
            <person name="Forbes L.D."/>
            <person name="Gabisi A.M."/>
            <person name="Garza M."/>
            <person name="Hamilton C."/>
            <person name="Henderson N."/>
            <person name="Hernandez O."/>
            <person name="Hines S."/>
            <person name="Hogues M.E."/>
            <person name="Huang M."/>
            <person name="Idlebird D.G."/>
            <person name="Johnson R."/>
            <person name="Jolivet A."/>
            <person name="Jones S."/>
            <person name="Kagan R."/>
            <person name="King L.M."/>
            <person name="Leal B."/>
            <person name="Lebow H."/>
            <person name="Lee S."/>
            <person name="LeVan J.M."/>
            <person name="Lewis L.C."/>
            <person name="London P."/>
            <person name="Lorensuhewa L.M."/>
            <person name="Loulseged H."/>
            <person name="Lovett D.A."/>
            <person name="Lucier A."/>
            <person name="Lucier R.L."/>
            <person name="Ma J."/>
            <person name="Madu R.C."/>
            <person name="Mapua P."/>
            <person name="Martindale A.D."/>
            <person name="Martinez E."/>
            <person name="Massey E."/>
            <person name="Mawhiney S."/>
            <person name="Meador M.G."/>
            <person name="Mendez S."/>
            <person name="Mercado C."/>
            <person name="Mercado I.C."/>
            <person name="Merritt C.E."/>
            <person name="Miner Z.L."/>
            <person name="Minja E."/>
            <person name="Mitchell T."/>
            <person name="Mohabbat F."/>
            <person name="Mohabbat K."/>
            <person name="Montgomery B."/>
            <person name="Moore N."/>
            <person name="Morris S."/>
            <person name="Munidasa M."/>
            <person name="Ngo R.N."/>
            <person name="Nguyen N.B."/>
            <person name="Nickerson E."/>
            <person name="Nwaokelemeh O.O."/>
            <person name="Nwokenkwo S."/>
            <person name="Obregon M."/>
            <person name="Oguh M."/>
            <person name="Oragunye N."/>
            <person name="Oviedo R.J."/>
            <person name="Parish B.J."/>
            <person name="Parker D.N."/>
            <person name="Parrish J."/>
            <person name="Parks K.L."/>
            <person name="Paul H.A."/>
            <person name="Payton B.A."/>
            <person name="Perez A."/>
            <person name="Perrin W."/>
            <person name="Pickens A."/>
            <person name="Primus E.L."/>
            <person name="Pu L.-L."/>
            <person name="Puazo M."/>
            <person name="Quiles M.M."/>
            <person name="Quiroz J.B."/>
            <person name="Rabata D."/>
            <person name="Reeves K."/>
            <person name="Ruiz S.J."/>
            <person name="Shao H."/>
            <person name="Sisson I."/>
            <person name="Sonaike T."/>
            <person name="Sorelle R.P."/>
            <person name="Sutton A.E."/>
            <person name="Svatek A.F."/>
            <person name="Svetz L.A."/>
            <person name="Tamerisa K.S."/>
            <person name="Taylor T.R."/>
            <person name="Teague B."/>
            <person name="Thomas N."/>
            <person name="Thorn R.D."/>
            <person name="Trejos Z.Y."/>
            <person name="Trevino B.K."/>
            <person name="Ukegbu O.N."/>
            <person name="Urban J.B."/>
            <person name="Vasquez L.I."/>
            <person name="Vera V.A."/>
            <person name="Villasana D.M."/>
            <person name="Wang L."/>
            <person name="Ward-Moore S."/>
            <person name="Warren J.T."/>
            <person name="Wei X."/>
            <person name="White F."/>
            <person name="Williamson A.L."/>
            <person name="Wleczyk R."/>
            <person name="Wooden H.S."/>
            <person name="Wooden S.H."/>
            <person name="Yen J."/>
            <person name="Yoon L."/>
            <person name="Yoon V."/>
            <person name="Zorrilla S.E."/>
            <person name="Nelson D."/>
            <person name="Kucherlapati R."/>
            <person name="Weinstock G."/>
            <person name="Gibbs R.A."/>
        </authorList>
    </citation>
    <scope>NUCLEOTIDE SEQUENCE [LARGE SCALE GENOMIC DNA]</scope>
</reference>
<reference key="2">
    <citation type="journal article" date="2004" name="Genome Res.">
        <title>The status, quality, and expansion of the NIH full-length cDNA project: the Mammalian Gene Collection (MGC).</title>
        <authorList>
            <consortium name="The MGC Project Team"/>
        </authorList>
    </citation>
    <scope>NUCLEOTIDE SEQUENCE [LARGE SCALE MRNA] (ISOFORMS 1 AND 2)</scope>
    <source>
        <tissue>Testis</tissue>
    </source>
</reference>
<reference key="3">
    <citation type="journal article" date="2007" name="Biochem. J.">
        <title>Biochemical characterization and lysosomal localization of the mannose-6-phosphate protein p76 (hypothetical protein LOC196463).</title>
        <authorList>
            <person name="Jensen A.G."/>
            <person name="Chemali M."/>
            <person name="Chapel A."/>
            <person name="Kieffer-Jaquinod S."/>
            <person name="Jadot M."/>
            <person name="Garin J."/>
            <person name="Journet A."/>
        </authorList>
    </citation>
    <scope>PROTEIN SEQUENCE OF 42-49 AND 244-250</scope>
    <scope>GLYCOSYLATION AT ASN-88; ASN-110; ASN-231; ASN-436; ASN-465 AND ASN-515</scope>
    <scope>INTERACTION WITH IGF2R</scope>
    <scope>SUBCELLULAR LOCATION</scope>
    <scope>TISSUE SPECIFICITY</scope>
    <scope>IDENTIFICATION BY MASS SPECTROMETRY</scope>
</reference>
<reference key="4">
    <citation type="journal article" date="2009" name="J. Proteome Res.">
        <title>Glycoproteomics analysis of human liver tissue by combination of multiple enzyme digestion and hydrazide chemistry.</title>
        <authorList>
            <person name="Chen R."/>
            <person name="Jiang X."/>
            <person name="Sun D."/>
            <person name="Han G."/>
            <person name="Wang F."/>
            <person name="Ye M."/>
            <person name="Wang L."/>
            <person name="Zou H."/>
        </authorList>
    </citation>
    <scope>GLYCOSYLATION [LARGE SCALE ANALYSIS] AT ASN-465</scope>
    <source>
        <tissue>Liver</tissue>
    </source>
</reference>
<reference key="5">
    <citation type="journal article" date="2011" name="BMC Syst. Biol.">
        <title>Initial characterization of the human central proteome.</title>
        <authorList>
            <person name="Burkard T.R."/>
            <person name="Planyavsky M."/>
            <person name="Kaupe I."/>
            <person name="Breitwieser F.P."/>
            <person name="Buerckstuemmer T."/>
            <person name="Bennett K.L."/>
            <person name="Superti-Furga G."/>
            <person name="Colinge J."/>
        </authorList>
    </citation>
    <scope>IDENTIFICATION BY MASS SPECTROMETRY [LARGE SCALE ANALYSIS]</scope>
</reference>
<reference key="6">
    <citation type="journal article" date="2015" name="Proteomics">
        <title>N-terminome analysis of the human mitochondrial proteome.</title>
        <authorList>
            <person name="Vaca Jacome A.S."/>
            <person name="Rabilloud T."/>
            <person name="Schaeffer-Reiss C."/>
            <person name="Rompais M."/>
            <person name="Ayoub D."/>
            <person name="Lane L."/>
            <person name="Bairoch A."/>
            <person name="Van Dorsselaer A."/>
            <person name="Carapito C."/>
        </authorList>
    </citation>
    <scope>IDENTIFICATION BY MASS SPECTROMETRY [LARGE SCALE ANALYSIS]</scope>
</reference>
<accession>Q8NHP8</accession>
<accession>F5H5E2</accession>
<gene>
    <name type="primary">PLBD2</name>
</gene>
<feature type="signal peptide" evidence="2">
    <location>
        <begin position="1"/>
        <end position="41"/>
    </location>
</feature>
<feature type="chain" id="PRO_0000286110" description="Putative phospholipase B-like 2">
    <location>
        <begin position="42"/>
        <end position="589"/>
    </location>
</feature>
<feature type="chain" id="PRO_0000314074" description="Putative phospholipase B-like 2 32 kDa form">
    <location>
        <begin position="42"/>
        <end position="243"/>
    </location>
</feature>
<feature type="chain" id="PRO_0000314075" description="Putative phospholipase B-like 2 45 kDa form">
    <location>
        <begin position="244"/>
        <end position="589"/>
    </location>
</feature>
<feature type="glycosylation site" description="N-linked (GlcNAc...) asparagine" evidence="2">
    <location>
        <position position="88"/>
    </location>
</feature>
<feature type="glycosylation site" description="N-linked (GlcNAc...) asparagine" evidence="2">
    <location>
        <position position="110"/>
    </location>
</feature>
<feature type="glycosylation site" description="N-linked (GlcNAc...) asparagine" evidence="2">
    <location>
        <position position="231"/>
    </location>
</feature>
<feature type="glycosylation site" description="N-linked (GlcNAc...) asparagine" evidence="2">
    <location>
        <position position="436"/>
    </location>
</feature>
<feature type="glycosylation site" description="N-linked (GlcNAc...) asparagine" evidence="2 3">
    <location>
        <position position="465"/>
    </location>
</feature>
<feature type="glycosylation site" description="N-linked (GlcNAc...) asparagine" evidence="2">
    <location>
        <position position="515"/>
    </location>
</feature>
<feature type="disulfide bond" evidence="1">
    <location>
        <begin position="142"/>
        <end position="152"/>
    </location>
</feature>
<feature type="disulfide bond" evidence="1">
    <location>
        <begin position="492"/>
        <end position="495"/>
    </location>
</feature>
<feature type="splice variant" id="VSP_055623" description="In isoform 2." evidence="4">
    <location>
        <begin position="374"/>
        <end position="405"/>
    </location>
</feature>
<feature type="sequence variant" id="VAR_062187" description="In dbSNP:rs7965471.">
    <original>Q</original>
    <variation>P</variation>
    <location>
        <position position="54"/>
    </location>
</feature>
<feature type="sequence variant" id="VAR_032075" description="In dbSNP:rs12425042.">
    <original>R</original>
    <variation>C</variation>
    <location>
        <position position="524"/>
    </location>
</feature>
<feature type="sequence conflict" description="In Ref. 2; AAH30618." evidence="5" ref="2">
    <original>Q</original>
    <variation>K</variation>
    <location>
        <position position="521"/>
    </location>
</feature>